<organism>
    <name type="scientific">Haloquadratum walsbyi (strain DSM 16790 / HBSQ001)</name>
    <dbReference type="NCBI Taxonomy" id="362976"/>
    <lineage>
        <taxon>Archaea</taxon>
        <taxon>Methanobacteriati</taxon>
        <taxon>Methanobacteriota</taxon>
        <taxon>Stenosarchaea group</taxon>
        <taxon>Halobacteria</taxon>
        <taxon>Halobacteriales</taxon>
        <taxon>Haloferacaceae</taxon>
        <taxon>Haloquadratum</taxon>
    </lineage>
</organism>
<comment type="function">
    <text evidence="1">Is required not only for elongation of protein synthesis but also for the initiation of all mRNA translation through initiator tRNA(fMet) aminoacylation.</text>
</comment>
<comment type="catalytic activity">
    <reaction evidence="1">
        <text>tRNA(Met) + L-methionine + ATP = L-methionyl-tRNA(Met) + AMP + diphosphate</text>
        <dbReference type="Rhea" id="RHEA:13481"/>
        <dbReference type="Rhea" id="RHEA-COMP:9667"/>
        <dbReference type="Rhea" id="RHEA-COMP:9698"/>
        <dbReference type="ChEBI" id="CHEBI:30616"/>
        <dbReference type="ChEBI" id="CHEBI:33019"/>
        <dbReference type="ChEBI" id="CHEBI:57844"/>
        <dbReference type="ChEBI" id="CHEBI:78442"/>
        <dbReference type="ChEBI" id="CHEBI:78530"/>
        <dbReference type="ChEBI" id="CHEBI:456215"/>
        <dbReference type="EC" id="6.1.1.10"/>
    </reaction>
</comment>
<comment type="cofactor">
    <cofactor evidence="1">
        <name>Zn(2+)</name>
        <dbReference type="ChEBI" id="CHEBI:29105"/>
    </cofactor>
    <text evidence="1">Binds 1 zinc ion per subunit.</text>
</comment>
<comment type="subunit">
    <text evidence="1">Homodimer.</text>
</comment>
<comment type="subcellular location">
    <subcellularLocation>
        <location evidence="1">Cytoplasm</location>
    </subcellularLocation>
</comment>
<comment type="similarity">
    <text evidence="1">Belongs to the class-I aminoacyl-tRNA synthetase family. MetG type 1 subfamily.</text>
</comment>
<protein>
    <recommendedName>
        <fullName evidence="1">Methionine--tRNA ligase</fullName>
        <ecNumber evidence="1">6.1.1.10</ecNumber>
    </recommendedName>
    <alternativeName>
        <fullName evidence="1">Methionyl-tRNA synthetase</fullName>
        <shortName evidence="1">MetRS</shortName>
    </alternativeName>
</protein>
<reference key="1">
    <citation type="journal article" date="2006" name="BMC Genomics">
        <title>The genome of the square archaeon Haloquadratum walsbyi: life at the limits of water activity.</title>
        <authorList>
            <person name="Bolhuis H."/>
            <person name="Palm P."/>
            <person name="Wende A."/>
            <person name="Falb M."/>
            <person name="Rampp M."/>
            <person name="Rodriguez-Valera F."/>
            <person name="Pfeiffer F."/>
            <person name="Oesterhelt D."/>
        </authorList>
    </citation>
    <scope>NUCLEOTIDE SEQUENCE [LARGE SCALE GENOMIC DNA]</scope>
    <source>
        <strain>DSM 16790 / HBSQ001</strain>
    </source>
</reference>
<accession>Q18JV4</accession>
<proteinExistence type="inferred from homology"/>
<gene>
    <name evidence="1" type="primary">metG</name>
    <name type="ordered locus">HQ_1572A</name>
</gene>
<name>SYM_HALWD</name>
<sequence length="741" mass="82611">MTMKQYTMSKMNAETQTQTRESFPTDDPAVVTCGLPYANGDLHIGHLRTYVGGDIFSRALKRLGQETAFVSGSDMHGTPVAVNAAEEGVTPESFALRHHEQYETTFPQFGIEFDNYGHTHDETNVEMTREIVEALIQAGYVYEREIPVAYDPAADQWLPDRFVNGTCPYCGAHARGDECDEGCGRHLEPGEIETPVSTITGNDAEYRRREHQFFAVSELQSYLSSFLDRLEGTTNAQNQPREWVEGELQDWCITRDMDWGVDYPDDNDLVLYVWVDAPIEYISSTKQYAERVGTDSFDWKNAWRDIPGVRSHSSSSAKDSSEGNSPSNINNGGEIIHIIGRDIIQHHTVFWPAMLHAAGYTEPRAVMASGFITLEGKGFSTSRNRAVWADEYLAEGFHPDLLRYYLATNGGFQQDVDFSWSRFRERVNNELVGTVGNFIYRSLLFAAREFDGTPDVALSDSVEERIETAIDAFTAGVNEYSVRAVGDAAVKLAQFGNEYIQHHEPWKLSNDDPQKQQVMRDCIQLAKAIAVLFEPVTPAAAERVWADLGESGDIHTVGIESALVAPPQTFDEPTELFEKIPEERVDELTAKLADRVTDPTDDDDSDTDTETGTDVAETTNESHSESNMTEIDPIADERIDFEEFEELDLRVAEIIETEPIEDADKLARIVVDLGIEQRQLVAGIRQLHDLDDLIGETVVIVANLEKAEIFGVESNGMLLAAGADADLLTTREDADPGTSIQ</sequence>
<keyword id="KW-0030">Aminoacyl-tRNA synthetase</keyword>
<keyword id="KW-0067">ATP-binding</keyword>
<keyword id="KW-0963">Cytoplasm</keyword>
<keyword id="KW-0436">Ligase</keyword>
<keyword id="KW-0479">Metal-binding</keyword>
<keyword id="KW-0547">Nucleotide-binding</keyword>
<keyword id="KW-0648">Protein biosynthesis</keyword>
<keyword id="KW-1185">Reference proteome</keyword>
<keyword id="KW-0694">RNA-binding</keyword>
<keyword id="KW-0820">tRNA-binding</keyword>
<keyword id="KW-0862">Zinc</keyword>
<feature type="chain" id="PRO_0000331936" description="Methionine--tRNA ligase">
    <location>
        <begin position="1"/>
        <end position="741"/>
    </location>
</feature>
<feature type="domain" description="tRNA-binding" evidence="1">
    <location>
        <begin position="643"/>
        <end position="741"/>
    </location>
</feature>
<feature type="region of interest" description="Disordered" evidence="2">
    <location>
        <begin position="1"/>
        <end position="25"/>
    </location>
</feature>
<feature type="region of interest" description="Disordered" evidence="2">
    <location>
        <begin position="309"/>
        <end position="329"/>
    </location>
</feature>
<feature type="region of interest" description="Disordered" evidence="2">
    <location>
        <begin position="591"/>
        <end position="629"/>
    </location>
</feature>
<feature type="short sequence motif" description="'HIGH' region">
    <location>
        <begin position="36"/>
        <end position="46"/>
    </location>
</feature>
<feature type="compositionally biased region" description="Polar residues" evidence="2">
    <location>
        <begin position="1"/>
        <end position="22"/>
    </location>
</feature>
<feature type="compositionally biased region" description="Low complexity" evidence="2">
    <location>
        <begin position="311"/>
        <end position="329"/>
    </location>
</feature>
<feature type="compositionally biased region" description="Acidic residues" evidence="2">
    <location>
        <begin position="599"/>
        <end position="611"/>
    </location>
</feature>
<feature type="compositionally biased region" description="Polar residues" evidence="2">
    <location>
        <begin position="616"/>
        <end position="629"/>
    </location>
</feature>
<feature type="binding site" evidence="1">
    <location>
        <position position="167"/>
    </location>
    <ligand>
        <name>Zn(2+)</name>
        <dbReference type="ChEBI" id="CHEBI:29105"/>
    </ligand>
</feature>
<feature type="binding site" evidence="1">
    <location>
        <position position="170"/>
    </location>
    <ligand>
        <name>Zn(2+)</name>
        <dbReference type="ChEBI" id="CHEBI:29105"/>
    </ligand>
</feature>
<feature type="binding site" evidence="1">
    <location>
        <position position="179"/>
    </location>
    <ligand>
        <name>Zn(2+)</name>
        <dbReference type="ChEBI" id="CHEBI:29105"/>
    </ligand>
</feature>
<feature type="binding site" evidence="1">
    <location>
        <position position="183"/>
    </location>
    <ligand>
        <name>Zn(2+)</name>
        <dbReference type="ChEBI" id="CHEBI:29105"/>
    </ligand>
</feature>
<feature type="binding site" evidence="1">
    <location>
        <position position="381"/>
    </location>
    <ligand>
        <name>ATP</name>
        <dbReference type="ChEBI" id="CHEBI:30616"/>
    </ligand>
</feature>
<evidence type="ECO:0000255" key="1">
    <source>
        <dbReference type="HAMAP-Rule" id="MF_00098"/>
    </source>
</evidence>
<evidence type="ECO:0000256" key="2">
    <source>
        <dbReference type="SAM" id="MobiDB-lite"/>
    </source>
</evidence>
<dbReference type="EC" id="6.1.1.10" evidence="1"/>
<dbReference type="EMBL" id="AM180088">
    <property type="protein sequence ID" value="CAJ51700.1"/>
    <property type="molecule type" value="Genomic_DNA"/>
</dbReference>
<dbReference type="RefSeq" id="WP_011570852.1">
    <property type="nucleotide sequence ID" value="NC_008212.1"/>
</dbReference>
<dbReference type="SMR" id="Q18JV4"/>
<dbReference type="STRING" id="362976.HQ_1572A"/>
<dbReference type="GeneID" id="4194273"/>
<dbReference type="KEGG" id="hwa:HQ_1572A"/>
<dbReference type="eggNOG" id="arCOG00810">
    <property type="taxonomic scope" value="Archaea"/>
</dbReference>
<dbReference type="HOGENOM" id="CLU_009710_1_2_2"/>
<dbReference type="Proteomes" id="UP000001975">
    <property type="component" value="Chromosome"/>
</dbReference>
<dbReference type="GO" id="GO:0017101">
    <property type="term" value="C:aminoacyl-tRNA synthetase multienzyme complex"/>
    <property type="evidence" value="ECO:0007669"/>
    <property type="project" value="TreeGrafter"/>
</dbReference>
<dbReference type="GO" id="GO:0005829">
    <property type="term" value="C:cytosol"/>
    <property type="evidence" value="ECO:0007669"/>
    <property type="project" value="TreeGrafter"/>
</dbReference>
<dbReference type="GO" id="GO:0005524">
    <property type="term" value="F:ATP binding"/>
    <property type="evidence" value="ECO:0007669"/>
    <property type="project" value="UniProtKB-UniRule"/>
</dbReference>
<dbReference type="GO" id="GO:0046872">
    <property type="term" value="F:metal ion binding"/>
    <property type="evidence" value="ECO:0007669"/>
    <property type="project" value="UniProtKB-KW"/>
</dbReference>
<dbReference type="GO" id="GO:0004825">
    <property type="term" value="F:methionine-tRNA ligase activity"/>
    <property type="evidence" value="ECO:0007669"/>
    <property type="project" value="UniProtKB-UniRule"/>
</dbReference>
<dbReference type="GO" id="GO:0000049">
    <property type="term" value="F:tRNA binding"/>
    <property type="evidence" value="ECO:0007669"/>
    <property type="project" value="UniProtKB-KW"/>
</dbReference>
<dbReference type="GO" id="GO:0006431">
    <property type="term" value="P:methionyl-tRNA aminoacylation"/>
    <property type="evidence" value="ECO:0007669"/>
    <property type="project" value="UniProtKB-UniRule"/>
</dbReference>
<dbReference type="CDD" id="cd07957">
    <property type="entry name" value="Anticodon_Ia_Met"/>
    <property type="match status" value="1"/>
</dbReference>
<dbReference type="CDD" id="cd00814">
    <property type="entry name" value="MetRS_core"/>
    <property type="match status" value="1"/>
</dbReference>
<dbReference type="CDD" id="cd02800">
    <property type="entry name" value="tRNA_bind_EcMetRS_like"/>
    <property type="match status" value="1"/>
</dbReference>
<dbReference type="Gene3D" id="3.40.50.620">
    <property type="entry name" value="HUPs"/>
    <property type="match status" value="1"/>
</dbReference>
<dbReference type="Gene3D" id="1.10.730.10">
    <property type="entry name" value="Isoleucyl-tRNA Synthetase, Domain 1"/>
    <property type="match status" value="1"/>
</dbReference>
<dbReference type="Gene3D" id="2.20.28.20">
    <property type="entry name" value="Methionyl-tRNA synthetase, Zn-domain"/>
    <property type="match status" value="1"/>
</dbReference>
<dbReference type="Gene3D" id="2.40.50.140">
    <property type="entry name" value="Nucleic acid-binding proteins"/>
    <property type="match status" value="1"/>
</dbReference>
<dbReference type="HAMAP" id="MF_00098">
    <property type="entry name" value="Met_tRNA_synth_type1"/>
    <property type="match status" value="1"/>
</dbReference>
<dbReference type="InterPro" id="IPR001412">
    <property type="entry name" value="aa-tRNA-synth_I_CS"/>
</dbReference>
<dbReference type="InterPro" id="IPR041872">
    <property type="entry name" value="Anticodon_Met"/>
</dbReference>
<dbReference type="InterPro" id="IPR004495">
    <property type="entry name" value="Met-tRNA-synth_bsu_C"/>
</dbReference>
<dbReference type="InterPro" id="IPR023458">
    <property type="entry name" value="Met-tRNA_ligase_1"/>
</dbReference>
<dbReference type="InterPro" id="IPR014758">
    <property type="entry name" value="Met-tRNA_synth"/>
</dbReference>
<dbReference type="InterPro" id="IPR015413">
    <property type="entry name" value="Methionyl/Leucyl_tRNA_Synth"/>
</dbReference>
<dbReference type="InterPro" id="IPR033911">
    <property type="entry name" value="MetRS_core"/>
</dbReference>
<dbReference type="InterPro" id="IPR029038">
    <property type="entry name" value="MetRS_Zn"/>
</dbReference>
<dbReference type="InterPro" id="IPR012340">
    <property type="entry name" value="NA-bd_OB-fold"/>
</dbReference>
<dbReference type="InterPro" id="IPR014729">
    <property type="entry name" value="Rossmann-like_a/b/a_fold"/>
</dbReference>
<dbReference type="InterPro" id="IPR002547">
    <property type="entry name" value="tRNA-bd_dom"/>
</dbReference>
<dbReference type="InterPro" id="IPR009080">
    <property type="entry name" value="tRNAsynth_Ia_anticodon-bd"/>
</dbReference>
<dbReference type="NCBIfam" id="TIGR00398">
    <property type="entry name" value="metG"/>
    <property type="match status" value="1"/>
</dbReference>
<dbReference type="NCBIfam" id="NF001100">
    <property type="entry name" value="PRK00133.1"/>
    <property type="match status" value="1"/>
</dbReference>
<dbReference type="PANTHER" id="PTHR45765">
    <property type="entry name" value="METHIONINE--TRNA LIGASE"/>
    <property type="match status" value="1"/>
</dbReference>
<dbReference type="PANTHER" id="PTHR45765:SF1">
    <property type="entry name" value="METHIONINE--TRNA LIGASE, CYTOPLASMIC"/>
    <property type="match status" value="1"/>
</dbReference>
<dbReference type="Pfam" id="PF19303">
    <property type="entry name" value="Anticodon_3"/>
    <property type="match status" value="1"/>
</dbReference>
<dbReference type="Pfam" id="PF09334">
    <property type="entry name" value="tRNA-synt_1g"/>
    <property type="match status" value="1"/>
</dbReference>
<dbReference type="Pfam" id="PF01588">
    <property type="entry name" value="tRNA_bind"/>
    <property type="match status" value="1"/>
</dbReference>
<dbReference type="PRINTS" id="PR01041">
    <property type="entry name" value="TRNASYNTHMET"/>
</dbReference>
<dbReference type="SUPFAM" id="SSF47323">
    <property type="entry name" value="Anticodon-binding domain of a subclass of class I aminoacyl-tRNA synthetases"/>
    <property type="match status" value="1"/>
</dbReference>
<dbReference type="SUPFAM" id="SSF57770">
    <property type="entry name" value="Methionyl-tRNA synthetase (MetRS), Zn-domain"/>
    <property type="match status" value="1"/>
</dbReference>
<dbReference type="SUPFAM" id="SSF50249">
    <property type="entry name" value="Nucleic acid-binding proteins"/>
    <property type="match status" value="1"/>
</dbReference>
<dbReference type="SUPFAM" id="SSF52374">
    <property type="entry name" value="Nucleotidylyl transferase"/>
    <property type="match status" value="1"/>
</dbReference>
<dbReference type="PROSITE" id="PS00178">
    <property type="entry name" value="AA_TRNA_LIGASE_I"/>
    <property type="match status" value="1"/>
</dbReference>
<dbReference type="PROSITE" id="PS50886">
    <property type="entry name" value="TRBD"/>
    <property type="match status" value="1"/>
</dbReference>